<name>MSRQ_ECOSM</name>
<organism>
    <name type="scientific">Escherichia coli (strain SMS-3-5 / SECEC)</name>
    <dbReference type="NCBI Taxonomy" id="439855"/>
    <lineage>
        <taxon>Bacteria</taxon>
        <taxon>Pseudomonadati</taxon>
        <taxon>Pseudomonadota</taxon>
        <taxon>Gammaproteobacteria</taxon>
        <taxon>Enterobacterales</taxon>
        <taxon>Enterobacteriaceae</taxon>
        <taxon>Escherichia</taxon>
    </lineage>
</organism>
<proteinExistence type="inferred from homology"/>
<accession>B1LQN7</accession>
<evidence type="ECO:0000255" key="1">
    <source>
        <dbReference type="HAMAP-Rule" id="MF_01207"/>
    </source>
</evidence>
<dbReference type="EMBL" id="CP000970">
    <property type="protein sequence ID" value="ACB17606.1"/>
    <property type="molecule type" value="Genomic_DNA"/>
</dbReference>
<dbReference type="RefSeq" id="WP_001241112.1">
    <property type="nucleotide sequence ID" value="NC_010498.1"/>
</dbReference>
<dbReference type="SMR" id="B1LQN7"/>
<dbReference type="KEGG" id="ecm:EcSMS35_1213"/>
<dbReference type="HOGENOM" id="CLU_080662_1_0_6"/>
<dbReference type="Proteomes" id="UP000007011">
    <property type="component" value="Chromosome"/>
</dbReference>
<dbReference type="GO" id="GO:0005886">
    <property type="term" value="C:plasma membrane"/>
    <property type="evidence" value="ECO:0007669"/>
    <property type="project" value="UniProtKB-SubCell"/>
</dbReference>
<dbReference type="GO" id="GO:0009055">
    <property type="term" value="F:electron transfer activity"/>
    <property type="evidence" value="ECO:0007669"/>
    <property type="project" value="UniProtKB-UniRule"/>
</dbReference>
<dbReference type="GO" id="GO:0010181">
    <property type="term" value="F:FMN binding"/>
    <property type="evidence" value="ECO:0007669"/>
    <property type="project" value="UniProtKB-UniRule"/>
</dbReference>
<dbReference type="GO" id="GO:0020037">
    <property type="term" value="F:heme binding"/>
    <property type="evidence" value="ECO:0007669"/>
    <property type="project" value="UniProtKB-UniRule"/>
</dbReference>
<dbReference type="GO" id="GO:0046872">
    <property type="term" value="F:metal ion binding"/>
    <property type="evidence" value="ECO:0007669"/>
    <property type="project" value="UniProtKB-KW"/>
</dbReference>
<dbReference type="GO" id="GO:0016679">
    <property type="term" value="F:oxidoreductase activity, acting on diphenols and related substances as donors"/>
    <property type="evidence" value="ECO:0007669"/>
    <property type="project" value="TreeGrafter"/>
</dbReference>
<dbReference type="GO" id="GO:0030091">
    <property type="term" value="P:protein repair"/>
    <property type="evidence" value="ECO:0007669"/>
    <property type="project" value="UniProtKB-UniRule"/>
</dbReference>
<dbReference type="HAMAP" id="MF_01207">
    <property type="entry name" value="MsrQ"/>
    <property type="match status" value="1"/>
</dbReference>
<dbReference type="InterPro" id="IPR013130">
    <property type="entry name" value="Fe3_Rdtase_TM_dom"/>
</dbReference>
<dbReference type="InterPro" id="IPR022837">
    <property type="entry name" value="MsrQ-like"/>
</dbReference>
<dbReference type="NCBIfam" id="NF003830">
    <property type="entry name" value="PRK05419.1-1"/>
    <property type="match status" value="1"/>
</dbReference>
<dbReference type="NCBIfam" id="NF003831">
    <property type="entry name" value="PRK05419.1-2"/>
    <property type="match status" value="1"/>
</dbReference>
<dbReference type="NCBIfam" id="NF003832">
    <property type="entry name" value="PRK05419.1-4"/>
    <property type="match status" value="1"/>
</dbReference>
<dbReference type="PANTHER" id="PTHR36964">
    <property type="entry name" value="PROTEIN-METHIONINE-SULFOXIDE REDUCTASE HEME-BINDING SUBUNIT MSRQ"/>
    <property type="match status" value="1"/>
</dbReference>
<dbReference type="PANTHER" id="PTHR36964:SF1">
    <property type="entry name" value="PROTEIN-METHIONINE-SULFOXIDE REDUCTASE HEME-BINDING SUBUNIT MSRQ"/>
    <property type="match status" value="1"/>
</dbReference>
<dbReference type="Pfam" id="PF01794">
    <property type="entry name" value="Ferric_reduct"/>
    <property type="match status" value="1"/>
</dbReference>
<comment type="function">
    <text evidence="1">Part of the MsrPQ system that repairs oxidized periplasmic proteins containing methionine sulfoxide residues (Met-O), using respiratory chain electrons. Thus protects these proteins from oxidative-stress damage caused by reactive species of oxygen and chlorine generated by the host defense mechanisms. MsrPQ is essential for the maintenance of envelope integrity under bleach stress, rescuing a wide series of structurally unrelated periplasmic proteins from methionine oxidation, including the primary periplasmic chaperone SurA and the lipoprotein Pal. MsrQ provides electrons for reduction to the reductase catalytic subunit MsrP, using the quinone pool of the respiratory chain.</text>
</comment>
<comment type="cofactor">
    <cofactor evidence="1">
        <name>FMN</name>
        <dbReference type="ChEBI" id="CHEBI:58210"/>
    </cofactor>
    <text evidence="1">Binds 1 FMN per subunit.</text>
</comment>
<comment type="cofactor">
    <cofactor evidence="1">
        <name>heme b</name>
        <dbReference type="ChEBI" id="CHEBI:60344"/>
    </cofactor>
    <text evidence="1">Binds 1 heme b (iron(II)-protoporphyrin IX) group per subunit.</text>
</comment>
<comment type="subunit">
    <text evidence="1">Heterodimer of a catalytic subunit (MsrP) and a heme-binding subunit (MsrQ).</text>
</comment>
<comment type="subcellular location">
    <subcellularLocation>
        <location evidence="1">Cell inner membrane</location>
        <topology evidence="1">Multi-pass membrane protein</topology>
    </subcellularLocation>
</comment>
<comment type="similarity">
    <text evidence="1">Belongs to the MsrQ family.</text>
</comment>
<keyword id="KW-0997">Cell inner membrane</keyword>
<keyword id="KW-1003">Cell membrane</keyword>
<keyword id="KW-0249">Electron transport</keyword>
<keyword id="KW-0285">Flavoprotein</keyword>
<keyword id="KW-0288">FMN</keyword>
<keyword id="KW-0349">Heme</keyword>
<keyword id="KW-0408">Iron</keyword>
<keyword id="KW-0472">Membrane</keyword>
<keyword id="KW-0479">Metal-binding</keyword>
<keyword id="KW-0812">Transmembrane</keyword>
<keyword id="KW-1133">Transmembrane helix</keyword>
<keyword id="KW-0813">Transport</keyword>
<reference key="1">
    <citation type="journal article" date="2008" name="J. Bacteriol.">
        <title>Insights into the environmental resistance gene pool from the genome sequence of the multidrug-resistant environmental isolate Escherichia coli SMS-3-5.</title>
        <authorList>
            <person name="Fricke W.F."/>
            <person name="Wright M.S."/>
            <person name="Lindell A.H."/>
            <person name="Harkins D.M."/>
            <person name="Baker-Austin C."/>
            <person name="Ravel J."/>
            <person name="Stepanauskas R."/>
        </authorList>
    </citation>
    <scope>NUCLEOTIDE SEQUENCE [LARGE SCALE GENOMIC DNA]</scope>
    <source>
        <strain>SMS-3-5 / SECEC</strain>
    </source>
</reference>
<sequence>MRLTAKQVTWLKVSLHLAGLLPFLWLVWAINHGGLGADPVKDIQHFTGRTALKFLLATLLITPLARYVKQPLLIRTRRLLGLWCFAWATLHLTSYALLELGVNNLALLGKELITRPYLTLGIISWVILLALAFTSTQAMQRKLGKHWQQLHNFVYLVAILAPIHYLWSVKIISPQPLIYAGLAVLLLALRYKKLRSLFNRLRKQVHNKLSV</sequence>
<feature type="chain" id="PRO_1000138735" description="Protein-methionine-sulfoxide reductase heme-binding subunit MsrQ">
    <location>
        <begin position="1"/>
        <end position="211"/>
    </location>
</feature>
<feature type="transmembrane region" description="Helical" evidence="1">
    <location>
        <begin position="17"/>
        <end position="37"/>
    </location>
</feature>
<feature type="transmembrane region" description="Helical" evidence="1">
    <location>
        <begin position="54"/>
        <end position="74"/>
    </location>
</feature>
<feature type="transmembrane region" description="Helical" evidence="1">
    <location>
        <begin position="82"/>
        <end position="102"/>
    </location>
</feature>
<feature type="transmembrane region" description="Helical" evidence="1">
    <location>
        <begin position="116"/>
        <end position="136"/>
    </location>
</feature>
<feature type="transmembrane region" description="Helical" evidence="1">
    <location>
        <begin position="153"/>
        <end position="173"/>
    </location>
</feature>
<gene>
    <name evidence="1" type="primary">msrQ</name>
    <name type="ordered locus">EcSMS35_1213</name>
</gene>
<protein>
    <recommendedName>
        <fullName evidence="1">Protein-methionine-sulfoxide reductase heme-binding subunit MsrQ</fullName>
    </recommendedName>
    <alternativeName>
        <fullName evidence="1">Flavocytochrome MsrQ</fullName>
    </alternativeName>
</protein>